<organism>
    <name type="scientific">Lupinus polyphyllus</name>
    <name type="common">Large-leaved lupine</name>
    <dbReference type="NCBI Taxonomy" id="3874"/>
    <lineage>
        <taxon>Eukaryota</taxon>
        <taxon>Viridiplantae</taxon>
        <taxon>Streptophyta</taxon>
        <taxon>Embryophyta</taxon>
        <taxon>Tracheophyta</taxon>
        <taxon>Spermatophyta</taxon>
        <taxon>Magnoliopsida</taxon>
        <taxon>eudicotyledons</taxon>
        <taxon>Gunneridae</taxon>
        <taxon>Pentapetalae</taxon>
        <taxon>rosids</taxon>
        <taxon>fabids</taxon>
        <taxon>Fabales</taxon>
        <taxon>Fabaceae</taxon>
        <taxon>Papilionoideae</taxon>
        <taxon>50 kb inversion clade</taxon>
        <taxon>genistoids sensu lato</taxon>
        <taxon>core genistoids</taxon>
        <taxon>Genisteae</taxon>
        <taxon>Lupinus</taxon>
    </lineage>
</organism>
<proteinExistence type="evidence at transcript level"/>
<keyword id="KW-0106">Calcium</keyword>
<keyword id="KW-1015">Disulfide bond</keyword>
<keyword id="KW-0325">Glycoprotein</keyword>
<keyword id="KW-0349">Heme</keyword>
<keyword id="KW-0376">Hydrogen peroxide</keyword>
<keyword id="KW-0408">Iron</keyword>
<keyword id="KW-0479">Metal-binding</keyword>
<keyword id="KW-0560">Oxidoreductase</keyword>
<keyword id="KW-0575">Peroxidase</keyword>
<feature type="chain" id="PRO_0000055608" description="Peroxidase">
    <location>
        <begin position="1" status="less than"/>
        <end position="158"/>
    </location>
</feature>
<feature type="binding site" evidence="2">
    <location>
        <position position="2"/>
    </location>
    <ligand>
        <name>substrate</name>
    </ligand>
</feature>
<feature type="binding site" description="axial binding residue" evidence="2">
    <location>
        <position position="32"/>
    </location>
    <ligand>
        <name>heme b</name>
        <dbReference type="ChEBI" id="CHEBI:60344"/>
    </ligand>
    <ligandPart>
        <name>Fe</name>
        <dbReference type="ChEBI" id="CHEBI:18248"/>
    </ligandPart>
</feature>
<feature type="binding site" evidence="2">
    <location>
        <position position="33"/>
    </location>
    <ligand>
        <name>Ca(2+)</name>
        <dbReference type="ChEBI" id="CHEBI:29108"/>
        <label>2</label>
    </ligand>
</feature>
<feature type="binding site" evidence="2">
    <location>
        <position position="78"/>
    </location>
    <ligand>
        <name>Ca(2+)</name>
        <dbReference type="ChEBI" id="CHEBI:29108"/>
        <label>2</label>
    </ligand>
</feature>
<feature type="binding site" evidence="2">
    <location>
        <position position="81"/>
    </location>
    <ligand>
        <name>Ca(2+)</name>
        <dbReference type="ChEBI" id="CHEBI:29108"/>
        <label>2</label>
    </ligand>
</feature>
<feature type="binding site" evidence="2">
    <location>
        <position position="86"/>
    </location>
    <ligand>
        <name>Ca(2+)</name>
        <dbReference type="ChEBI" id="CHEBI:29108"/>
        <label>2</label>
    </ligand>
</feature>
<feature type="glycosylation site" description="N-linked (GlcNAc...) asparagine" evidence="1">
    <location>
        <position position="48"/>
    </location>
</feature>
<feature type="disulfide bond" evidence="2">
    <location>
        <begin position="39"/>
        <end position="64"/>
    </location>
</feature>
<feature type="non-terminal residue">
    <location>
        <position position="1"/>
    </location>
</feature>
<evidence type="ECO:0000255" key="1"/>
<evidence type="ECO:0000255" key="2">
    <source>
        <dbReference type="PROSITE-ProRule" id="PRU00297"/>
    </source>
</evidence>
<protein>
    <recommendedName>
        <fullName>Peroxidase</fullName>
        <ecNumber>1.11.1.7</ecNumber>
    </recommendedName>
</protein>
<name>PERX_LUPPO</name>
<dbReference type="EC" id="1.11.1.7"/>
<dbReference type="EMBL" id="X51764">
    <property type="protein sequence ID" value="CAA36066.1"/>
    <property type="molecule type" value="mRNA"/>
</dbReference>
<dbReference type="PIR" id="S26672">
    <property type="entry name" value="S26672"/>
</dbReference>
<dbReference type="SMR" id="P16147"/>
<dbReference type="PeroxiBase" id="2141">
    <property type="entry name" value="LpoPrx01"/>
</dbReference>
<dbReference type="GO" id="GO:0020037">
    <property type="term" value="F:heme binding"/>
    <property type="evidence" value="ECO:0007669"/>
    <property type="project" value="InterPro"/>
</dbReference>
<dbReference type="GO" id="GO:0140825">
    <property type="term" value="F:lactoperoxidase activity"/>
    <property type="evidence" value="ECO:0007669"/>
    <property type="project" value="UniProtKB-EC"/>
</dbReference>
<dbReference type="GO" id="GO:0046872">
    <property type="term" value="F:metal ion binding"/>
    <property type="evidence" value="ECO:0007669"/>
    <property type="project" value="UniProtKB-KW"/>
</dbReference>
<dbReference type="GO" id="GO:0042744">
    <property type="term" value="P:hydrogen peroxide catabolic process"/>
    <property type="evidence" value="ECO:0007669"/>
    <property type="project" value="UniProtKB-KW"/>
</dbReference>
<dbReference type="GO" id="GO:0006979">
    <property type="term" value="P:response to oxidative stress"/>
    <property type="evidence" value="ECO:0007669"/>
    <property type="project" value="InterPro"/>
</dbReference>
<dbReference type="FunFam" id="1.10.420.10:FF:000001">
    <property type="entry name" value="Peroxidase"/>
    <property type="match status" value="1"/>
</dbReference>
<dbReference type="Gene3D" id="1.10.420.10">
    <property type="entry name" value="Peroxidase, domain 2"/>
    <property type="match status" value="1"/>
</dbReference>
<dbReference type="InterPro" id="IPR002016">
    <property type="entry name" value="Haem_peroxidase"/>
</dbReference>
<dbReference type="InterPro" id="IPR010255">
    <property type="entry name" value="Haem_peroxidase_sf"/>
</dbReference>
<dbReference type="InterPro" id="IPR000823">
    <property type="entry name" value="Peroxidase_pln"/>
</dbReference>
<dbReference type="InterPro" id="IPR019793">
    <property type="entry name" value="Peroxidases_heam-ligand_BS"/>
</dbReference>
<dbReference type="PANTHER" id="PTHR31388:SF5">
    <property type="entry name" value="PEROXIDASE"/>
    <property type="match status" value="1"/>
</dbReference>
<dbReference type="PANTHER" id="PTHR31388">
    <property type="entry name" value="PEROXIDASE 72-RELATED"/>
    <property type="match status" value="1"/>
</dbReference>
<dbReference type="Pfam" id="PF00141">
    <property type="entry name" value="peroxidase"/>
    <property type="match status" value="1"/>
</dbReference>
<dbReference type="PRINTS" id="PR00458">
    <property type="entry name" value="PEROXIDASE"/>
</dbReference>
<dbReference type="PRINTS" id="PR00461">
    <property type="entry name" value="PLPEROXIDASE"/>
</dbReference>
<dbReference type="SUPFAM" id="SSF48113">
    <property type="entry name" value="Heme-dependent peroxidases"/>
    <property type="match status" value="1"/>
</dbReference>
<dbReference type="PROSITE" id="PS00435">
    <property type="entry name" value="PEROXIDASE_1"/>
    <property type="match status" value="1"/>
</dbReference>
<dbReference type="PROSITE" id="PS50873">
    <property type="entry name" value="PEROXIDASE_4"/>
    <property type="match status" value="1"/>
</dbReference>
<comment type="function">
    <text>Removal of H(2)O(2), oxidation of toxic reductants, biosynthesis and degradation of lignin, suberization, auxin catabolism, response to environmental stresses such as wounding, pathogen attack and oxidative stress. These functions might be dependent on each isozyme/isoform in each plant tissue.</text>
</comment>
<comment type="catalytic activity">
    <reaction>
        <text>2 a phenolic donor + H2O2 = 2 a phenolic radical donor + 2 H2O</text>
        <dbReference type="Rhea" id="RHEA:56136"/>
        <dbReference type="ChEBI" id="CHEBI:15377"/>
        <dbReference type="ChEBI" id="CHEBI:16240"/>
        <dbReference type="ChEBI" id="CHEBI:139520"/>
        <dbReference type="ChEBI" id="CHEBI:139521"/>
        <dbReference type="EC" id="1.11.1.7"/>
    </reaction>
</comment>
<comment type="cofactor">
    <cofactor>
        <name>Ca(2+)</name>
        <dbReference type="ChEBI" id="CHEBI:29108"/>
    </cofactor>
    <text>Binds 2 calcium ions per subunit.</text>
</comment>
<comment type="cofactor">
    <cofactor>
        <name>heme b</name>
        <dbReference type="ChEBI" id="CHEBI:60344"/>
    </cofactor>
    <text>Binds 1 heme b (iron(II)-protoporphyrin IX) group per subunit.</text>
</comment>
<comment type="similarity">
    <text evidence="2">Belongs to the peroxidase family. Classical plant (class III) peroxidase subfamily.</text>
</comment>
<accession>P16147</accession>
<sequence>EPGPSSDLTTLTTKFAAKGLTPSDLTVLSGGHTIGQSECQFFKTRIYNDTNIDTNFATSRQANCPFSAGGETNLAPLDSLTPNRFDNNYYKDLVSNRGLLHSDQVLFNGGSQDTLVRTYSTNNVKFFSDFAAAIVKMSKISPLTGIAGEIRKNCRVIN</sequence>
<reference key="1">
    <citation type="journal article" date="1991" name="J. Plant Physiol.">
        <title>Molecular cloning of a Lupinus polyphyllus cDNA encoding a basic peroxidase isoenzyme of cell suspension cultures.</title>
        <authorList>
            <person name="Perrey R."/>
            <person name="Wink M."/>
            <person name="Warskulat U."/>
        </authorList>
    </citation>
    <scope>NUCLEOTIDE SEQUENCE [MRNA]</scope>
</reference>